<accession>Q5HDV7</accession>
<comment type="function">
    <text evidence="1">Involved in the binding of tRNA to the ribosomes.</text>
</comment>
<comment type="subunit">
    <text evidence="1">Part of the 30S ribosomal subunit.</text>
</comment>
<comment type="similarity">
    <text evidence="1">Belongs to the universal ribosomal protein uS10 family.</text>
</comment>
<feature type="chain" id="PRO_0000146594" description="Small ribosomal subunit protein uS10">
    <location>
        <begin position="1"/>
        <end position="102"/>
    </location>
</feature>
<reference key="1">
    <citation type="journal article" date="2005" name="J. Bacteriol.">
        <title>Insights on evolution of virulence and resistance from the complete genome analysis of an early methicillin-resistant Staphylococcus aureus strain and a biofilm-producing methicillin-resistant Staphylococcus epidermidis strain.</title>
        <authorList>
            <person name="Gill S.R."/>
            <person name="Fouts D.E."/>
            <person name="Archer G.L."/>
            <person name="Mongodin E.F."/>
            <person name="DeBoy R.T."/>
            <person name="Ravel J."/>
            <person name="Paulsen I.T."/>
            <person name="Kolonay J.F."/>
            <person name="Brinkac L.M."/>
            <person name="Beanan M.J."/>
            <person name="Dodson R.J."/>
            <person name="Daugherty S.C."/>
            <person name="Madupu R."/>
            <person name="Angiuoli S.V."/>
            <person name="Durkin A.S."/>
            <person name="Haft D.H."/>
            <person name="Vamathevan J.J."/>
            <person name="Khouri H."/>
            <person name="Utterback T.R."/>
            <person name="Lee C."/>
            <person name="Dimitrov G."/>
            <person name="Jiang L."/>
            <person name="Qin H."/>
            <person name="Weidman J."/>
            <person name="Tran K."/>
            <person name="Kang K.H."/>
            <person name="Hance I.R."/>
            <person name="Nelson K.E."/>
            <person name="Fraser C.M."/>
        </authorList>
    </citation>
    <scope>NUCLEOTIDE SEQUENCE [LARGE SCALE GENOMIC DNA]</scope>
    <source>
        <strain>COL</strain>
    </source>
</reference>
<organism>
    <name type="scientific">Staphylococcus aureus (strain COL)</name>
    <dbReference type="NCBI Taxonomy" id="93062"/>
    <lineage>
        <taxon>Bacteria</taxon>
        <taxon>Bacillati</taxon>
        <taxon>Bacillota</taxon>
        <taxon>Bacilli</taxon>
        <taxon>Bacillales</taxon>
        <taxon>Staphylococcaceae</taxon>
        <taxon>Staphylococcus</taxon>
    </lineage>
</organism>
<sequence length="102" mass="11579">MAKQKIRIRLKAYDHRVIDQSAEKIVETAKRSGADVSGPIPLPTEKSVYTIIRAVHMYKDSREQFEQRTHKRLIDIVNPTPKTVDALMGLNLPSGVDIEIKL</sequence>
<name>RS10_STAAC</name>
<protein>
    <recommendedName>
        <fullName evidence="1">Small ribosomal subunit protein uS10</fullName>
    </recommendedName>
    <alternativeName>
        <fullName evidence="2">30S ribosomal protein S10</fullName>
    </alternativeName>
</protein>
<proteinExistence type="inferred from homology"/>
<dbReference type="EMBL" id="CP000046">
    <property type="protein sequence ID" value="AAW37115.1"/>
    <property type="molecule type" value="Genomic_DNA"/>
</dbReference>
<dbReference type="RefSeq" id="WP_001118669.1">
    <property type="nucleotide sequence ID" value="NZ_JBGOFO010000004.1"/>
</dbReference>
<dbReference type="SMR" id="Q5HDV7"/>
<dbReference type="KEGG" id="sac:SACOL2240"/>
<dbReference type="HOGENOM" id="CLU_122625_1_3_9"/>
<dbReference type="Proteomes" id="UP000000530">
    <property type="component" value="Chromosome"/>
</dbReference>
<dbReference type="GO" id="GO:1990904">
    <property type="term" value="C:ribonucleoprotein complex"/>
    <property type="evidence" value="ECO:0007669"/>
    <property type="project" value="UniProtKB-KW"/>
</dbReference>
<dbReference type="GO" id="GO:0005840">
    <property type="term" value="C:ribosome"/>
    <property type="evidence" value="ECO:0007669"/>
    <property type="project" value="UniProtKB-KW"/>
</dbReference>
<dbReference type="GO" id="GO:0003735">
    <property type="term" value="F:structural constituent of ribosome"/>
    <property type="evidence" value="ECO:0007669"/>
    <property type="project" value="InterPro"/>
</dbReference>
<dbReference type="GO" id="GO:0000049">
    <property type="term" value="F:tRNA binding"/>
    <property type="evidence" value="ECO:0007669"/>
    <property type="project" value="UniProtKB-UniRule"/>
</dbReference>
<dbReference type="GO" id="GO:0006412">
    <property type="term" value="P:translation"/>
    <property type="evidence" value="ECO:0007669"/>
    <property type="project" value="UniProtKB-UniRule"/>
</dbReference>
<dbReference type="FunFam" id="3.30.70.600:FF:000001">
    <property type="entry name" value="30S ribosomal protein S10"/>
    <property type="match status" value="1"/>
</dbReference>
<dbReference type="Gene3D" id="3.30.70.600">
    <property type="entry name" value="Ribosomal protein S10 domain"/>
    <property type="match status" value="1"/>
</dbReference>
<dbReference type="HAMAP" id="MF_00508">
    <property type="entry name" value="Ribosomal_uS10"/>
    <property type="match status" value="1"/>
</dbReference>
<dbReference type="InterPro" id="IPR001848">
    <property type="entry name" value="Ribosomal_uS10"/>
</dbReference>
<dbReference type="InterPro" id="IPR018268">
    <property type="entry name" value="Ribosomal_uS10_CS"/>
</dbReference>
<dbReference type="InterPro" id="IPR027486">
    <property type="entry name" value="Ribosomal_uS10_dom"/>
</dbReference>
<dbReference type="InterPro" id="IPR036838">
    <property type="entry name" value="Ribosomal_uS10_dom_sf"/>
</dbReference>
<dbReference type="NCBIfam" id="NF001861">
    <property type="entry name" value="PRK00596.1"/>
    <property type="match status" value="1"/>
</dbReference>
<dbReference type="NCBIfam" id="TIGR01049">
    <property type="entry name" value="rpsJ_bact"/>
    <property type="match status" value="1"/>
</dbReference>
<dbReference type="PANTHER" id="PTHR11700">
    <property type="entry name" value="30S RIBOSOMAL PROTEIN S10 FAMILY MEMBER"/>
    <property type="match status" value="1"/>
</dbReference>
<dbReference type="Pfam" id="PF00338">
    <property type="entry name" value="Ribosomal_S10"/>
    <property type="match status" value="1"/>
</dbReference>
<dbReference type="PRINTS" id="PR00971">
    <property type="entry name" value="RIBOSOMALS10"/>
</dbReference>
<dbReference type="SMART" id="SM01403">
    <property type="entry name" value="Ribosomal_S10"/>
    <property type="match status" value="1"/>
</dbReference>
<dbReference type="SUPFAM" id="SSF54999">
    <property type="entry name" value="Ribosomal protein S10"/>
    <property type="match status" value="1"/>
</dbReference>
<dbReference type="PROSITE" id="PS00361">
    <property type="entry name" value="RIBOSOMAL_S10"/>
    <property type="match status" value="1"/>
</dbReference>
<keyword id="KW-0687">Ribonucleoprotein</keyword>
<keyword id="KW-0689">Ribosomal protein</keyword>
<gene>
    <name evidence="1" type="primary">rpsJ</name>
    <name type="ordered locus">SACOL2240</name>
</gene>
<evidence type="ECO:0000255" key="1">
    <source>
        <dbReference type="HAMAP-Rule" id="MF_00508"/>
    </source>
</evidence>
<evidence type="ECO:0000305" key="2"/>